<comment type="function">
    <text evidence="5 9">Endoplasmic reticulum translocase required to remove mitochondrial transmembrane proteins mistargeted to the endoplasmic reticulum (PubMed:22918956, PubMed:32973005). Acts as a dislocase that mediates the ATP-dependent extraction of mislocalized mitochondrial transmembrane proteins from the endoplasmic reticulum membrane (PubMed:32973005). Specifically binds mitochondrial tail-anchored transmembrane proteins: has an atypically large substrate-binding pocket that recognizes and binds moderately hydrophobic transmembranes with short hydrophilic lumenal domains (PubMed:32973005).</text>
</comment>
<comment type="catalytic activity">
    <reaction evidence="9">
        <text>[protein]-with a C-terminal TM segment(out) + ATP + H2O = [protein]-with a C-terminal TM segment(in) + ADP + phosphate + H(+)</text>
        <dbReference type="Rhea" id="RHEA:66168"/>
        <dbReference type="Rhea" id="RHEA-COMP:16963"/>
        <dbReference type="ChEBI" id="CHEBI:15377"/>
        <dbReference type="ChEBI" id="CHEBI:15378"/>
        <dbReference type="ChEBI" id="CHEBI:30616"/>
        <dbReference type="ChEBI" id="CHEBI:43474"/>
        <dbReference type="ChEBI" id="CHEBI:90782"/>
        <dbReference type="ChEBI" id="CHEBI:456216"/>
    </reaction>
</comment>
<comment type="cofactor">
    <cofactor evidence="4 9">
        <name>Mg(2+)</name>
        <dbReference type="ChEBI" id="CHEBI:18420"/>
    </cofactor>
</comment>
<comment type="activity regulation">
    <text evidence="7">The ATPase activity is stimulated by phosphatidylinositol 4-phosphate (PI4P).</text>
</comment>
<comment type="subcellular location">
    <subcellularLocation>
        <location evidence="2 4 6 7">Endoplasmic reticulum membrane</location>
        <topology evidence="9">Multi-pass membrane protein</topology>
    </subcellularLocation>
    <text evidence="7">Localizes to endoplasmic reticulum regions devoid of phosphatidylinositol 4-phosphate (PI4P) hydrolytic machinery.</text>
</comment>
<comment type="domain">
    <text evidence="9">Contains a large substrate-binding pocket that recognizes alpha-helical transmembranes, which alternately faces the endoplasmic reticulum lumen and cytosol, while remaining accessible to the lipid bilayer through a lateral opening (PubMed:32973005). The translocase alternates between two conformations: inward-open (E1) and outward-open (E2) states (PubMed:32973005). Undergoes a series of conformational changes with ATP-binding, phosphorylation of the Asp active site and subsequent dephosphorylation in a Post-Albers cycle (i.e., E1 -&gt; E1-ATP -&gt; E1P-ADP -&gt; E1P -&gt; E2P -&gt; E2-Pi -&gt; E1) (PubMed:32973005). A substrate transmembrane helix with a short, preferentially positively charged lumenal segment binds to the outward-open pocket and the E2P-to-E1 transition flips the transmembrane by a switch from the outward-open to inward-open conformation (PubMed:32973005).</text>
</comment>
<comment type="disruption phenotype">
    <text evidence="2 5 6">Impaired mitochondrial transmembrane tail-anchored protein localization, characterized by mitochondrial transmembrane tail-anchored protein accumulation at the endoplasmic reticulum (PubMed:22918956). In addition, a wide spectrum of phenotypes is observed, including induction of the endoplasmic reticulum unfolded protein response, defects in lipid and sterol homeostasis, and dysregulated protein N-glycosylation, topogenesis and turnover (PubMed:12058017, PubMed:22918956, PubMed:24392018).</text>
</comment>
<comment type="miscellaneous">
    <text evidence="3">Present with 1870 molecules/cell in log phase SD medium.</text>
</comment>
<comment type="similarity">
    <text evidence="13">Belongs to the cation transport ATPase (P-type) (TC 3.A.3) family. Type V subfamily.</text>
</comment>
<comment type="caution">
    <text evidence="2 4 6 8 9">Was initially thought to mediate ion transport such as calcium or manganese (PubMed:12058017, PubMed:24392018). However, different publications have shown that it does not act as an ion transporter (PubMed:22745129, PubMed:32353073, PubMed:32973005). Specifically binds moderately hydrophobic transmembrane with short hydrophilic lumenal domains that misinsert into the endoplasmic reticulum (PubMed:32973005).</text>
</comment>
<comment type="online information" name="Protein Spotlight">
    <link uri="https://www.proteinspotlight.org/back_issues/234/"/>
    <text>Wrong place - Issue 234 of March 2021</text>
</comment>
<sequence>MTKKSFVSSPIVRDSTLLVPKSLIAKPYVLPFFPLYATFAQLYFQQYDRYIKGPEWTFVYLGTLVSLNILVMLMPAWNVKIKAKFNYSTTKNVNEATHILIYTTPNNGSDGIVEIQRVTEAGSLQTFFQFQKKRFLWHENEQVFSSPKFLVDESPKIGDFQKCKGHSGDLTHLKRLYGENSFDIPIPTFMELFKEHAVAPLFVFQVFCVALWLLDEFWYYSLFNLFMIISMEAAAVFQRLTALKEFRTMGIKPYTINVFRNKKWVALQTNELLPMDLVSITRTAEESAIPCDLILLDGSAIVNEAMLSGESTPLLKESIKLRPSEDNLQLDGVDKIAVLHGGTKALQVTPPEHKSDIPPPPDGGALAIVTKTGFETSQGSLVRVMIYSAERVSVDNKEALMFILFLLIFAVIASWYVWVEGTKMGRIQSKLILDCILIITSVVPPELPMELTMAVNSSLAALAKFYVYCTEPFRIPFAGRIDVCCFDKTGTLTGEDLVFEGLAGISADSENIRHLYSAAEAPESTILVIGAAHALVKLEDGDIVGDPMEKATLKAVGWAVERKNSNYREGTGKLDIIRRFQFSSALKRSASIASHNDALFAAVKGAPETIRERLSDIPKNYDEIYKSFTRSGSRVLALASKSLPKMSQSKIDDLNRDDVESELTFNGFLIFHCPLKDDAIETIKMLNESSHRSIMITGDNPLTAVHVAKEVGIVFGETLILDRAGKSDDNQLLFRDVEETVSIPFDPSKDTFDHSKLFDRYDIAVTGYALNALEGHSQLRDLLRHTWVYARVSPSQKEFLLNTLKDMGYQTLMCGDGTNDVGALKQAHVGIALLNGTEEGLKKLGEQRRLEGMKMMYIKQTEFMARWNQPQPPVPEPIAHLFPPGPKNPHYLKALESKGTVITPEIRKAVEEANSKPVEVIKPNGLSEKKPADLASLLLNSAGDAQGDEAPALKLGDASCAAPFTSKLANVSAVTNIIRQGRCALVNTIQMYKILALNCLISAYSLSIIYMAGVKFGDGQATVSGLLLSVCFLSISRGKPLEKLSKQRPQSGIFNVYIMGSILSQFAVHIATLVYITTEIYKLEPREPQVDLEKEFAPSLLNTGIFIIQLVQQVSTFAVNYQGEPFRENIRSNKGMYYGLLGVTGLALASATEFLPELNEAMKFVPMTDDFKIKLTLTLLLDFFGSWGVEHFFKFFFMDDKPSDISVQQVKIASK</sequence>
<organism>
    <name type="scientific">Saccharomyces cerevisiae (strain ATCC 204508 / S288c)</name>
    <name type="common">Baker's yeast</name>
    <dbReference type="NCBI Taxonomy" id="559292"/>
    <lineage>
        <taxon>Eukaryota</taxon>
        <taxon>Fungi</taxon>
        <taxon>Dikarya</taxon>
        <taxon>Ascomycota</taxon>
        <taxon>Saccharomycotina</taxon>
        <taxon>Saccharomycetes</taxon>
        <taxon>Saccharomycetales</taxon>
        <taxon>Saccharomycetaceae</taxon>
        <taxon>Saccharomyces</taxon>
    </lineage>
</organism>
<proteinExistence type="evidence at protein level"/>
<reference key="1">
    <citation type="journal article" date="1997" name="Nature">
        <title>The nucleotide sequence of Saccharomyces cerevisiae chromosome V.</title>
        <authorList>
            <person name="Dietrich F.S."/>
            <person name="Mulligan J.T."/>
            <person name="Hennessy K.M."/>
            <person name="Yelton M.A."/>
            <person name="Allen E."/>
            <person name="Araujo R."/>
            <person name="Aviles E."/>
            <person name="Berno A."/>
            <person name="Brennan T."/>
            <person name="Carpenter J."/>
            <person name="Chen E."/>
            <person name="Cherry J.M."/>
            <person name="Chung E."/>
            <person name="Duncan M."/>
            <person name="Guzman E."/>
            <person name="Hartzell G."/>
            <person name="Hunicke-Smith S."/>
            <person name="Hyman R.W."/>
            <person name="Kayser A."/>
            <person name="Komp C."/>
            <person name="Lashkari D."/>
            <person name="Lew H."/>
            <person name="Lin D."/>
            <person name="Mosedale D."/>
            <person name="Nakahara K."/>
            <person name="Namath A."/>
            <person name="Norgren R."/>
            <person name="Oefner P."/>
            <person name="Oh C."/>
            <person name="Petel F.X."/>
            <person name="Roberts D."/>
            <person name="Sehl P."/>
            <person name="Schramm S."/>
            <person name="Shogren T."/>
            <person name="Smith V."/>
            <person name="Taylor P."/>
            <person name="Wei Y."/>
            <person name="Botstein D."/>
            <person name="Davis R.W."/>
        </authorList>
    </citation>
    <scope>NUCLEOTIDE SEQUENCE [LARGE SCALE GENOMIC DNA]</scope>
    <source>
        <strain>ATCC 204508 / S288c</strain>
    </source>
</reference>
<reference key="2">
    <citation type="journal article" date="2014" name="G3 (Bethesda)">
        <title>The reference genome sequence of Saccharomyces cerevisiae: Then and now.</title>
        <authorList>
            <person name="Engel S.R."/>
            <person name="Dietrich F.S."/>
            <person name="Fisk D.G."/>
            <person name="Binkley G."/>
            <person name="Balakrishnan R."/>
            <person name="Costanzo M.C."/>
            <person name="Dwight S.S."/>
            <person name="Hitz B.C."/>
            <person name="Karra K."/>
            <person name="Nash R.S."/>
            <person name="Weng S."/>
            <person name="Wong E.D."/>
            <person name="Lloyd P."/>
            <person name="Skrzypek M.S."/>
            <person name="Miyasato S.R."/>
            <person name="Simison M."/>
            <person name="Cherry J.M."/>
        </authorList>
    </citation>
    <scope>GENOME REANNOTATION</scope>
    <source>
        <strain>ATCC 204508 / S288c</strain>
    </source>
</reference>
<reference key="3">
    <citation type="journal article" date="1999" name="Mol. Microbiol.">
        <title>P-type ATPase spf1 mutants show a novel resistance mechanism for the killer toxin SMKT.</title>
        <authorList>
            <person name="Suzuki C."/>
            <person name="Shimma Y."/>
        </authorList>
    </citation>
    <scope>DISRUPTION PHENOTYPE</scope>
</reference>
<reference key="4">
    <citation type="journal article" date="2002" name="J. Cell Biol.">
        <title>Cod1p/Spf1p is a P-type ATPase involved in ER function and Ca2+ homeostasis.</title>
        <authorList>
            <person name="Cronin S.R."/>
            <person name="Rao R."/>
            <person name="Hampton R.Y."/>
        </authorList>
    </citation>
    <scope>SUBCELLULAR LOCATION</scope>
    <scope>DISRUPTION PHENOTYPE</scope>
</reference>
<reference key="5">
    <citation type="journal article" date="2003" name="Nature">
        <title>Global analysis of protein expression in yeast.</title>
        <authorList>
            <person name="Ghaemmaghami S."/>
            <person name="Huh W.-K."/>
            <person name="Bower K."/>
            <person name="Howson R.W."/>
            <person name="Belle A."/>
            <person name="Dephoure N."/>
            <person name="O'Shea E.K."/>
            <person name="Weissman J.S."/>
        </authorList>
    </citation>
    <scope>LEVEL OF PROTEIN EXPRESSION [LARGE SCALE ANALYSIS]</scope>
</reference>
<reference key="6">
    <citation type="journal article" date="2006" name="Proc. Natl. Acad. Sci. U.S.A.">
        <title>A global topology map of the Saccharomyces cerevisiae membrane proteome.</title>
        <authorList>
            <person name="Kim H."/>
            <person name="Melen K."/>
            <person name="Oesterberg M."/>
            <person name="von Heijne G."/>
        </authorList>
    </citation>
    <scope>TOPOLOGY [LARGE SCALE ANALYSIS]</scope>
    <source>
        <strain>ATCC 208353 / W303-1A</strain>
    </source>
</reference>
<reference key="7">
    <citation type="journal article" date="2008" name="Mol. Cell. Proteomics">
        <title>A multidimensional chromatography technology for in-depth phosphoproteome analysis.</title>
        <authorList>
            <person name="Albuquerque C.P."/>
            <person name="Smolka M.B."/>
            <person name="Payne S.H."/>
            <person name="Bafna V."/>
            <person name="Eng J."/>
            <person name="Zhou H."/>
        </authorList>
    </citation>
    <scope>PHOSPHORYLATION [LARGE SCALE ANALYSIS] AT SER-324 AND SER-936</scope>
    <scope>IDENTIFICATION BY MASS SPECTROMETRY [LARGE SCALE ANALYSIS]</scope>
</reference>
<reference key="8">
    <citation type="journal article" date="2012" name="J. Biol. Chem.">
        <title>Shadows of an absent partner: ATP hydrolysis and phosphoenzyme turnover of the Spf1 (sensitivity to Pichia farinosa killer toxin) P5-ATPase.</title>
        <authorList>
            <person name="Corradi G.R."/>
            <person name="de Tezanos Pinto F."/>
            <person name="Mazzitelli L.R."/>
            <person name="Adamo H.P."/>
        </authorList>
    </citation>
    <scope>ATPASE ACTIVITY</scope>
    <scope>ACTIVE SITE</scope>
    <scope>COFACTOR</scope>
    <scope>SUBCELLULAR LOCATION</scope>
    <scope>MUTAGENESIS OF ASP-487</scope>
</reference>
<reference key="9">
    <citation type="journal article" date="2012" name="Mol. Biol. Cell">
        <title>Ergosterol content specifies targeting of tail-anchored proteins to mitochondrial outer membranes.</title>
        <authorList>
            <person name="Krumpe K."/>
            <person name="Frumkin I."/>
            <person name="Herzig Y."/>
            <person name="Rimon N."/>
            <person name="Oezbalci C."/>
            <person name="Bruegger B."/>
            <person name="Rapaport D."/>
            <person name="Schuldiner M."/>
        </authorList>
    </citation>
    <scope>FUNCTION</scope>
    <scope>SUBCELLULAR LOCATION</scope>
    <scope>DISRUPTION PHENOTYPE</scope>
</reference>
<reference key="10">
    <citation type="journal article" date="2012" name="Proc. Natl. Acad. Sci. U.S.A.">
        <title>N-terminal acetylome analyses and functional insights of the N-terminal acetyltransferase NatB.</title>
        <authorList>
            <person name="Van Damme P."/>
            <person name="Lasa M."/>
            <person name="Polevoda B."/>
            <person name="Gazquez C."/>
            <person name="Elosegui-Artola A."/>
            <person name="Kim D.S."/>
            <person name="De Juan-Pardo E."/>
            <person name="Demeyer K."/>
            <person name="Hole K."/>
            <person name="Larrea E."/>
            <person name="Timmerman E."/>
            <person name="Prieto J."/>
            <person name="Arnesen T."/>
            <person name="Sherman F."/>
            <person name="Gevaert K."/>
            <person name="Aldabe R."/>
        </authorList>
    </citation>
    <scope>IDENTIFICATION BY MASS SPECTROMETRY [LARGE SCALE ANALYSIS]</scope>
</reference>
<reference key="11">
    <citation type="journal article" date="2013" name="PLoS ONE">
        <title>The yeast p5 type ATPase, spf1, regulates manganese transport into the endoplasmic reticulum.</title>
        <authorList>
            <person name="Cohen Y."/>
            <person name="Megyeri M."/>
            <person name="Chen O.C."/>
            <person name="Condomitti G."/>
            <person name="Riezman I."/>
            <person name="Loizides-Mangold U."/>
            <person name="Abdul-Sada A."/>
            <person name="Rimon N."/>
            <person name="Riezman H."/>
            <person name="Platt F.M."/>
            <person name="Futerman A.H."/>
            <person name="Schuldiner M."/>
        </authorList>
    </citation>
    <scope>ATPASE ACTIVITY</scope>
    <scope>ACTIVE SITE</scope>
    <scope>SUBCELLULAR LOCATION</scope>
    <scope>DISRUPTION PHENOTYPE</scope>
    <scope>MUTAGENESIS OF ASP-487</scope>
</reference>
<reference key="12">
    <citation type="journal article" date="2019" name="Mol. Biol. Cell">
        <title>The P5A ATPase Spf1p is stimulated by phosphatidylinositol 4-phosphate and influences cellular sterol homeostasis.</title>
        <authorList>
            <person name="Soerensen D.M."/>
            <person name="Holen H.W."/>
            <person name="Pedersen J.T."/>
            <person name="Martens H.J."/>
            <person name="Silvestro D."/>
            <person name="Stanchev L.D."/>
            <person name="Costa S.R."/>
            <person name="Guenther Pomorski T."/>
            <person name="Lopez-Marques R.L."/>
            <person name="Palmgren M."/>
        </authorList>
    </citation>
    <scope>ATPASE ACTIVITY</scope>
    <scope>ACTIVITY REGULATION</scope>
    <scope>SUBCELLULAR LOCATION</scope>
    <scope>ACTIVE SITE</scope>
    <scope>MUTAGENESIS OF ASP-487</scope>
</reference>
<reference key="13">
    <citation type="journal article" date="2020" name="PLoS ONE">
        <title>Reduction of the P5A-ATPase Spf1p phosphoenzyme by a Ca2+-dependent phosphatase.</title>
        <authorList>
            <person name="Corradi G.R."/>
            <person name="Mazzitelli L.R."/>
            <person name="Petrovich G.D."/>
            <person name="Grenon P."/>
            <person name="Soerensen D.M."/>
            <person name="Palmgren M."/>
            <person name="de Tezanos Pinto F."/>
            <person name="Adamo H.P."/>
        </authorList>
    </citation>
    <scope>ATPASE ACTIVITY</scope>
    <scope>ACTIVE SITE</scope>
    <scope>MUTAGENESIS OF ASP-487</scope>
</reference>
<reference key="14">
    <citation type="journal article" date="2020" name="Science">
        <title>The endoplasmic reticulum P5A-ATPase is a transmembrane helix dislocase.</title>
        <authorList>
            <person name="McKenna M.J."/>
            <person name="Sim S.I."/>
            <person name="Ordureau A."/>
            <person name="Wei L."/>
            <person name="Harper J.W."/>
            <person name="Shao S."/>
            <person name="Park E."/>
        </authorList>
    </citation>
    <scope>STRUCTURE BY ELECTRON MICROSCOPY (3.30 ANGSTROMS) IN COMPLEX WITH MAGNESIUM AND NON-HYDROLYZABLE ATP ANALOG</scope>
    <scope>FUNCTION</scope>
    <scope>CATALYTIC ACTIVITY</scope>
    <scope>COFACTOR</scope>
    <scope>DOMAIN</scope>
</reference>
<dbReference type="EC" id="7.4.2.-" evidence="9"/>
<dbReference type="EMBL" id="U18530">
    <property type="protein sequence ID" value="AAB64508.1"/>
    <property type="molecule type" value="Genomic_DNA"/>
</dbReference>
<dbReference type="EMBL" id="BK006939">
    <property type="protein sequence ID" value="DAA07622.1"/>
    <property type="molecule type" value="Genomic_DNA"/>
</dbReference>
<dbReference type="PIR" id="S50428">
    <property type="entry name" value="S50428"/>
</dbReference>
<dbReference type="RefSeq" id="NP_010883.3">
    <property type="nucleotide sequence ID" value="NM_001178846.3"/>
</dbReference>
<dbReference type="PDB" id="6XMP">
    <property type="method" value="EM"/>
    <property type="resolution" value="3.50 A"/>
    <property type="chains" value="A=1-1215"/>
</dbReference>
<dbReference type="PDB" id="6XMQ">
    <property type="method" value="EM"/>
    <property type="resolution" value="3.70 A"/>
    <property type="chains" value="A=1-1215"/>
</dbReference>
<dbReference type="PDB" id="6XMS">
    <property type="method" value="EM"/>
    <property type="resolution" value="3.40 A"/>
    <property type="chains" value="A=1-1215"/>
</dbReference>
<dbReference type="PDB" id="6XMT">
    <property type="method" value="EM"/>
    <property type="resolution" value="3.30 A"/>
    <property type="chains" value="A=1-1215"/>
</dbReference>
<dbReference type="PDB" id="6XMU">
    <property type="method" value="EM"/>
    <property type="resolution" value="3.30 A"/>
    <property type="chains" value="A=1-1215"/>
</dbReference>
<dbReference type="PDBsum" id="6XMP"/>
<dbReference type="PDBsum" id="6XMQ"/>
<dbReference type="PDBsum" id="6XMS"/>
<dbReference type="PDBsum" id="6XMT"/>
<dbReference type="PDBsum" id="6XMU"/>
<dbReference type="EMDB" id="EMD-22260"/>
<dbReference type="EMDB" id="EMD-22261"/>
<dbReference type="EMDB" id="EMD-22262"/>
<dbReference type="EMDB" id="EMD-22263"/>
<dbReference type="EMDB" id="EMD-22264"/>
<dbReference type="SMR" id="P39986"/>
<dbReference type="BioGRID" id="36698">
    <property type="interactions" value="505"/>
</dbReference>
<dbReference type="DIP" id="DIP-6637N"/>
<dbReference type="FunCoup" id="P39986">
    <property type="interactions" value="1306"/>
</dbReference>
<dbReference type="IntAct" id="P39986">
    <property type="interactions" value="34"/>
</dbReference>
<dbReference type="STRING" id="4932.YEL031W"/>
<dbReference type="TCDB" id="3.A.3.10.3">
    <property type="family name" value="the p-type atpase (p-atpase) superfamily"/>
</dbReference>
<dbReference type="CarbonylDB" id="P39986"/>
<dbReference type="iPTMnet" id="P39986"/>
<dbReference type="PaxDb" id="4932-YEL031W"/>
<dbReference type="PeptideAtlas" id="P39986"/>
<dbReference type="EnsemblFungi" id="YEL031W_mRNA">
    <property type="protein sequence ID" value="YEL031W"/>
    <property type="gene ID" value="YEL031W"/>
</dbReference>
<dbReference type="GeneID" id="856681"/>
<dbReference type="KEGG" id="sce:YEL031W"/>
<dbReference type="AGR" id="SGD:S000000757"/>
<dbReference type="SGD" id="S000000757">
    <property type="gene designation" value="SPF1"/>
</dbReference>
<dbReference type="VEuPathDB" id="FungiDB:YEL031W"/>
<dbReference type="eggNOG" id="KOG0209">
    <property type="taxonomic scope" value="Eukaryota"/>
</dbReference>
<dbReference type="GeneTree" id="ENSGT00550000075064"/>
<dbReference type="HOGENOM" id="CLU_001828_4_1_1"/>
<dbReference type="InParanoid" id="P39986"/>
<dbReference type="OMA" id="WYYSLFN"/>
<dbReference type="OrthoDB" id="48943at2759"/>
<dbReference type="BioCyc" id="YEAST:G3O-30153-MONOMER"/>
<dbReference type="Reactome" id="R-SCE-936837">
    <property type="pathway name" value="Ion transport by P-type ATPases"/>
</dbReference>
<dbReference type="BioGRID-ORCS" id="856681">
    <property type="hits" value="0 hits in 10 CRISPR screens"/>
</dbReference>
<dbReference type="PRO" id="PR:P39986"/>
<dbReference type="Proteomes" id="UP000002311">
    <property type="component" value="Chromosome V"/>
</dbReference>
<dbReference type="RNAct" id="P39986">
    <property type="molecule type" value="protein"/>
</dbReference>
<dbReference type="GO" id="GO:0005801">
    <property type="term" value="C:cis-Golgi network"/>
    <property type="evidence" value="ECO:0000314"/>
    <property type="project" value="SGD"/>
</dbReference>
<dbReference type="GO" id="GO:0005783">
    <property type="term" value="C:endoplasmic reticulum"/>
    <property type="evidence" value="ECO:0007005"/>
    <property type="project" value="SGD"/>
</dbReference>
<dbReference type="GO" id="GO:0005789">
    <property type="term" value="C:endoplasmic reticulum membrane"/>
    <property type="evidence" value="ECO:0000314"/>
    <property type="project" value="SGD"/>
</dbReference>
<dbReference type="GO" id="GO:0005739">
    <property type="term" value="C:mitochondrion"/>
    <property type="evidence" value="ECO:0007005"/>
    <property type="project" value="SGD"/>
</dbReference>
<dbReference type="GO" id="GO:0005524">
    <property type="term" value="F:ATP binding"/>
    <property type="evidence" value="ECO:0007669"/>
    <property type="project" value="UniProtKB-KW"/>
</dbReference>
<dbReference type="GO" id="GO:0016887">
    <property type="term" value="F:ATP hydrolysis activity"/>
    <property type="evidence" value="ECO:0000314"/>
    <property type="project" value="UniProtKB"/>
</dbReference>
<dbReference type="GO" id="GO:0019829">
    <property type="term" value="F:ATPase-coupled monoatomic cation transmembrane transporter activity"/>
    <property type="evidence" value="ECO:0000318"/>
    <property type="project" value="GO_Central"/>
</dbReference>
<dbReference type="GO" id="GO:0140567">
    <property type="term" value="F:membrane protein dislocase activity"/>
    <property type="evidence" value="ECO:0000314"/>
    <property type="project" value="UniProtKB"/>
</dbReference>
<dbReference type="GO" id="GO:0046872">
    <property type="term" value="F:metal ion binding"/>
    <property type="evidence" value="ECO:0007669"/>
    <property type="project" value="UniProtKB-KW"/>
</dbReference>
<dbReference type="GO" id="GO:0015662">
    <property type="term" value="F:P-type ion transporter activity"/>
    <property type="evidence" value="ECO:0000318"/>
    <property type="project" value="GO_Central"/>
</dbReference>
<dbReference type="GO" id="GO:0070273">
    <property type="term" value="F:phosphatidylinositol-4-phosphate binding"/>
    <property type="evidence" value="ECO:0000314"/>
    <property type="project" value="SGD"/>
</dbReference>
<dbReference type="GO" id="GO:0140569">
    <property type="term" value="P:extraction of mislocalized protein from ER membrane"/>
    <property type="evidence" value="ECO:0000314"/>
    <property type="project" value="UniProtKB"/>
</dbReference>
<dbReference type="GO" id="GO:0006874">
    <property type="term" value="P:intracellular calcium ion homeostasis"/>
    <property type="evidence" value="ECO:0000315"/>
    <property type="project" value="SGD"/>
</dbReference>
<dbReference type="GO" id="GO:0030026">
    <property type="term" value="P:intracellular manganese ion homeostasis"/>
    <property type="evidence" value="ECO:0000315"/>
    <property type="project" value="SGD"/>
</dbReference>
<dbReference type="GO" id="GO:0034214">
    <property type="term" value="P:protein hexamerization"/>
    <property type="evidence" value="ECO:0000314"/>
    <property type="project" value="UniProtKB"/>
</dbReference>
<dbReference type="GO" id="GO:0015031">
    <property type="term" value="P:protein transport"/>
    <property type="evidence" value="ECO:0007669"/>
    <property type="project" value="UniProtKB-KW"/>
</dbReference>
<dbReference type="GO" id="GO:0043335">
    <property type="term" value="P:protein unfolding"/>
    <property type="evidence" value="ECO:0000314"/>
    <property type="project" value="UniProtKB"/>
</dbReference>
<dbReference type="GO" id="GO:0055092">
    <property type="term" value="P:sterol homeostasis"/>
    <property type="evidence" value="ECO:0000315"/>
    <property type="project" value="SGD"/>
</dbReference>
<dbReference type="GO" id="GO:0055085">
    <property type="term" value="P:transmembrane transport"/>
    <property type="evidence" value="ECO:0000318"/>
    <property type="project" value="GO_Central"/>
</dbReference>
<dbReference type="CDD" id="cd07543">
    <property type="entry name" value="P-type_ATPase_cation"/>
    <property type="match status" value="1"/>
</dbReference>
<dbReference type="FunFam" id="2.70.150.10:FF:000049">
    <property type="entry name" value="Cation-transporting ATPase"/>
    <property type="match status" value="1"/>
</dbReference>
<dbReference type="FunFam" id="3.40.1110.10:FF:000054">
    <property type="entry name" value="Cation-transporting ATPase"/>
    <property type="match status" value="1"/>
</dbReference>
<dbReference type="FunFam" id="3.40.50.1000:FF:000071">
    <property type="entry name" value="Cation-transporting ATPase"/>
    <property type="match status" value="1"/>
</dbReference>
<dbReference type="Gene3D" id="3.40.1110.10">
    <property type="entry name" value="Calcium-transporting ATPase, cytoplasmic domain N"/>
    <property type="match status" value="1"/>
</dbReference>
<dbReference type="Gene3D" id="2.70.150.10">
    <property type="entry name" value="Calcium-transporting ATPase, cytoplasmic transduction domain A"/>
    <property type="match status" value="1"/>
</dbReference>
<dbReference type="Gene3D" id="3.40.50.1000">
    <property type="entry name" value="HAD superfamily/HAD-like"/>
    <property type="match status" value="1"/>
</dbReference>
<dbReference type="InterPro" id="IPR057255">
    <property type="entry name" value="2TM_P5A-ATPase"/>
</dbReference>
<dbReference type="InterPro" id="IPR023299">
    <property type="entry name" value="ATPase_P-typ_cyto_dom_N"/>
</dbReference>
<dbReference type="InterPro" id="IPR018303">
    <property type="entry name" value="ATPase_P-typ_P_site"/>
</dbReference>
<dbReference type="InterPro" id="IPR023298">
    <property type="entry name" value="ATPase_P-typ_TM_dom_sf"/>
</dbReference>
<dbReference type="InterPro" id="IPR008250">
    <property type="entry name" value="ATPase_P-typ_transduc_dom_A_sf"/>
</dbReference>
<dbReference type="InterPro" id="IPR036412">
    <property type="entry name" value="HAD-like_sf"/>
</dbReference>
<dbReference type="InterPro" id="IPR023214">
    <property type="entry name" value="HAD_sf"/>
</dbReference>
<dbReference type="InterPro" id="IPR006544">
    <property type="entry name" value="P-type_TPase_V"/>
</dbReference>
<dbReference type="InterPro" id="IPR047820">
    <property type="entry name" value="P5A-type_ATPase"/>
</dbReference>
<dbReference type="InterPro" id="IPR001757">
    <property type="entry name" value="P_typ_ATPase"/>
</dbReference>
<dbReference type="InterPro" id="IPR044492">
    <property type="entry name" value="P_typ_ATPase_HD_dom"/>
</dbReference>
<dbReference type="NCBIfam" id="TIGR01494">
    <property type="entry name" value="ATPase_P-type"/>
    <property type="match status" value="2"/>
</dbReference>
<dbReference type="NCBIfam" id="TIGR01657">
    <property type="entry name" value="P-ATPase-V"/>
    <property type="match status" value="1"/>
</dbReference>
<dbReference type="PANTHER" id="PTHR45630">
    <property type="entry name" value="CATION-TRANSPORTING ATPASE-RELATED"/>
    <property type="match status" value="1"/>
</dbReference>
<dbReference type="PANTHER" id="PTHR45630:SF7">
    <property type="entry name" value="ENDOPLASMIC RETICULUM TRANSMEMBRANE HELIX TRANSLOCASE"/>
    <property type="match status" value="1"/>
</dbReference>
<dbReference type="Pfam" id="PF23143">
    <property type="entry name" value="2TM_P5A-ATPase"/>
    <property type="match status" value="1"/>
</dbReference>
<dbReference type="Pfam" id="PF13246">
    <property type="entry name" value="Cation_ATPase"/>
    <property type="match status" value="1"/>
</dbReference>
<dbReference type="Pfam" id="PF00122">
    <property type="entry name" value="E1-E2_ATPase"/>
    <property type="match status" value="1"/>
</dbReference>
<dbReference type="PRINTS" id="PR00119">
    <property type="entry name" value="CATATPASE"/>
</dbReference>
<dbReference type="SFLD" id="SFLDS00003">
    <property type="entry name" value="Haloacid_Dehalogenase"/>
    <property type="match status" value="1"/>
</dbReference>
<dbReference type="SFLD" id="SFLDF00027">
    <property type="entry name" value="p-type_atpase"/>
    <property type="match status" value="1"/>
</dbReference>
<dbReference type="SUPFAM" id="SSF81653">
    <property type="entry name" value="Calcium ATPase, transduction domain A"/>
    <property type="match status" value="1"/>
</dbReference>
<dbReference type="SUPFAM" id="SSF81665">
    <property type="entry name" value="Calcium ATPase, transmembrane domain M"/>
    <property type="match status" value="1"/>
</dbReference>
<dbReference type="SUPFAM" id="SSF56784">
    <property type="entry name" value="HAD-like"/>
    <property type="match status" value="1"/>
</dbReference>
<dbReference type="SUPFAM" id="SSF81660">
    <property type="entry name" value="Metal cation-transporting ATPase, ATP-binding domain N"/>
    <property type="match status" value="1"/>
</dbReference>
<dbReference type="PROSITE" id="PS00154">
    <property type="entry name" value="ATPASE_E1_E2"/>
    <property type="match status" value="1"/>
</dbReference>
<name>SPF1_YEAST</name>
<gene>
    <name evidence="10 19" type="primary">SPF1</name>
    <name evidence="11" type="synonym">COD1</name>
    <name type="ordered locus">YEL031W</name>
</gene>
<keyword id="KW-0002">3D-structure</keyword>
<keyword id="KW-0067">ATP-binding</keyword>
<keyword id="KW-0256">Endoplasmic reticulum</keyword>
<keyword id="KW-0460">Magnesium</keyword>
<keyword id="KW-0472">Membrane</keyword>
<keyword id="KW-0479">Metal-binding</keyword>
<keyword id="KW-0547">Nucleotide-binding</keyword>
<keyword id="KW-0597">Phosphoprotein</keyword>
<keyword id="KW-0653">Protein transport</keyword>
<keyword id="KW-1185">Reference proteome</keyword>
<keyword id="KW-1278">Translocase</keyword>
<keyword id="KW-0812">Transmembrane</keyword>
<keyword id="KW-1133">Transmembrane helix</keyword>
<keyword id="KW-0813">Transport</keyword>
<accession>P39986</accession>
<accession>D3DLL8</accession>
<evidence type="ECO:0000250" key="1">
    <source>
        <dbReference type="UniProtKB" id="Q9Y2Q0"/>
    </source>
</evidence>
<evidence type="ECO:0000269" key="2">
    <source>
    </source>
</evidence>
<evidence type="ECO:0000269" key="3">
    <source>
    </source>
</evidence>
<evidence type="ECO:0000269" key="4">
    <source>
    </source>
</evidence>
<evidence type="ECO:0000269" key="5">
    <source>
    </source>
</evidence>
<evidence type="ECO:0000269" key="6">
    <source>
    </source>
</evidence>
<evidence type="ECO:0000269" key="7">
    <source>
    </source>
</evidence>
<evidence type="ECO:0000269" key="8">
    <source>
    </source>
</evidence>
<evidence type="ECO:0000269" key="9">
    <source>
    </source>
</evidence>
<evidence type="ECO:0000303" key="10">
    <source>
    </source>
</evidence>
<evidence type="ECO:0000303" key="11">
    <source>
    </source>
</evidence>
<evidence type="ECO:0000303" key="12">
    <source>
    </source>
</evidence>
<evidence type="ECO:0000305" key="13"/>
<evidence type="ECO:0000305" key="14">
    <source>
    </source>
</evidence>
<evidence type="ECO:0000305" key="15">
    <source>
    </source>
</evidence>
<evidence type="ECO:0000305" key="16">
    <source>
    </source>
</evidence>
<evidence type="ECO:0000305" key="17">
    <source>
    </source>
</evidence>
<evidence type="ECO:0000305" key="18">
    <source>
    </source>
</evidence>
<evidence type="ECO:0000312" key="19">
    <source>
        <dbReference type="SGD" id="S000000757"/>
    </source>
</evidence>
<evidence type="ECO:0007744" key="20">
    <source>
    </source>
</evidence>
<evidence type="ECO:0007829" key="21">
    <source>
        <dbReference type="PDB" id="6XMP"/>
    </source>
</evidence>
<evidence type="ECO:0007829" key="22">
    <source>
        <dbReference type="PDB" id="6XMS"/>
    </source>
</evidence>
<evidence type="ECO:0007829" key="23">
    <source>
        <dbReference type="PDB" id="6XMT"/>
    </source>
</evidence>
<evidence type="ECO:0007829" key="24">
    <source>
        <dbReference type="PDB" id="6XMU"/>
    </source>
</evidence>
<protein>
    <recommendedName>
        <fullName evidence="13">Endoplasmic reticulum transmembrane helix translocase</fullName>
        <ecNumber evidence="9">7.4.2.-</ecNumber>
    </recommendedName>
    <alternativeName>
        <fullName evidence="11">Complexed with DOR1 protein 1</fullName>
    </alternativeName>
    <alternativeName>
        <fullName evidence="12">Endoplasmic reticulum P5A-ATPase</fullName>
    </alternativeName>
    <alternativeName>
        <fullName evidence="10">Sensitivity to the P.farinosa killer toxin protein 1</fullName>
    </alternativeName>
</protein>
<feature type="chain" id="PRO_0000046349" description="Endoplasmic reticulum transmembrane helix translocase">
    <location>
        <begin position="1"/>
        <end position="1215"/>
    </location>
</feature>
<feature type="topological domain" description="Cytoplasmic" evidence="18">
    <location>
        <begin position="1"/>
        <end position="27"/>
    </location>
</feature>
<feature type="transmembrane region" description="Helical; Name=TMa" evidence="18">
    <location>
        <begin position="28"/>
        <end position="43"/>
    </location>
</feature>
<feature type="topological domain" description="Lumenal" evidence="18">
    <location>
        <begin position="44"/>
        <end position="56"/>
    </location>
</feature>
<feature type="transmembrane region" description="Helical; Name=TMb" evidence="18">
    <location>
        <begin position="57"/>
        <end position="76"/>
    </location>
</feature>
<feature type="topological domain" description="Cytoplasmic" evidence="18">
    <location>
        <begin position="77"/>
        <end position="188"/>
    </location>
</feature>
<feature type="transmembrane region" description="Helical; Name=TM1" evidence="18">
    <location>
        <begin position="189"/>
        <end position="216"/>
    </location>
</feature>
<feature type="topological domain" description="Lumenal" evidence="18">
    <location>
        <position position="217"/>
    </location>
</feature>
<feature type="transmembrane region" description="Helical; Name=TM2" evidence="18">
    <location>
        <begin position="218"/>
        <end position="246"/>
    </location>
</feature>
<feature type="topological domain" description="Cytoplasmic" evidence="18">
    <location>
        <begin position="247"/>
        <end position="395"/>
    </location>
</feature>
<feature type="transmembrane region" description="Helical; Name=TM3" evidence="18">
    <location>
        <begin position="396"/>
        <end position="425"/>
    </location>
</feature>
<feature type="topological domain" description="Lumenal" evidence="18">
    <location>
        <begin position="426"/>
        <end position="427"/>
    </location>
</feature>
<feature type="transmembrane region" description="Helical; Name=TM4a" evidence="18">
    <location>
        <begin position="428"/>
        <end position="442"/>
    </location>
</feature>
<feature type="transmembrane region" description="Helical; Name=TM4b" evidence="18">
    <location>
        <begin position="446"/>
        <end position="464"/>
    </location>
</feature>
<feature type="topological domain" description="Cytoplasmic" evidence="18">
    <location>
        <begin position="465"/>
        <end position="971"/>
    </location>
</feature>
<feature type="transmembrane region" description="Helical; Name=TM5" evidence="18">
    <location>
        <begin position="972"/>
        <end position="1011"/>
    </location>
</feature>
<feature type="topological domain" description="Lumenal" evidence="18">
    <location>
        <begin position="1012"/>
        <end position="1017"/>
    </location>
</feature>
<feature type="transmembrane region" description="Helical; Name=TM6" evidence="18">
    <location>
        <begin position="1018"/>
        <end position="1035"/>
    </location>
</feature>
<feature type="topological domain" description="Cytoplasmic" evidence="18">
    <location>
        <begin position="1036"/>
        <end position="1055"/>
    </location>
</feature>
<feature type="transmembrane region" description="Helical; Name=TM7" evidence="18">
    <location>
        <begin position="1056"/>
        <end position="1084"/>
    </location>
</feature>
<feature type="topological domain" description="Lumenal" evidence="18">
    <location>
        <begin position="1085"/>
        <end position="1099"/>
    </location>
</feature>
<feature type="transmembrane region" description="Helical; Name=TM8" evidence="18">
    <location>
        <begin position="1100"/>
        <end position="1121"/>
    </location>
</feature>
<feature type="topological domain" description="Cytoplasmic" evidence="18">
    <location>
        <begin position="1122"/>
        <end position="1133"/>
    </location>
</feature>
<feature type="transmembrane region" description="Helical; Name=TM9" evidence="18">
    <location>
        <begin position="1134"/>
        <end position="1151"/>
    </location>
</feature>
<feature type="topological domain" description="Lumenal" evidence="18">
    <location>
        <begin position="1152"/>
        <end position="1168"/>
    </location>
</feature>
<feature type="transmembrane region" description="Helical; Name=TM10" evidence="18">
    <location>
        <begin position="1169"/>
        <end position="1197"/>
    </location>
</feature>
<feature type="topological domain" description="Cytoplasmic" evidence="18">
    <location>
        <begin position="1198"/>
        <end position="1215"/>
    </location>
</feature>
<feature type="region of interest" description="A-domain; part 1" evidence="12">
    <location>
        <begin position="156"/>
        <end position="185"/>
    </location>
</feature>
<feature type="region of interest" description="A-domain; part 2" evidence="12">
    <location>
        <begin position="250"/>
        <end position="390"/>
    </location>
</feature>
<feature type="region of interest" description="P-domain; part 1" evidence="12">
    <location>
        <begin position="466"/>
        <end position="495"/>
    </location>
</feature>
<feature type="region of interest" description="N-domain" evidence="12">
    <location>
        <begin position="497"/>
        <end position="674"/>
    </location>
</feature>
<feature type="region of interest" description="P-domain; part 2" evidence="12">
    <location>
        <begin position="677"/>
        <end position="837"/>
    </location>
</feature>
<feature type="region of interest" description="Arm-like" evidence="12">
    <location>
        <begin position="838"/>
        <end position="953"/>
    </location>
</feature>
<feature type="region of interest" description="P-domain; part 3" evidence="12">
    <location>
        <begin position="954"/>
        <end position="969"/>
    </location>
</feature>
<feature type="active site" description="4-aspartylphosphate intermediate" evidence="14 15 16 17">
    <location>
        <position position="487"/>
    </location>
</feature>
<feature type="binding site" evidence="18">
    <location>
        <begin position="487"/>
        <end position="489"/>
    </location>
    <ligand>
        <name>ATP</name>
        <dbReference type="ChEBI" id="CHEBI:30616"/>
    </ligand>
</feature>
<feature type="binding site" evidence="18">
    <location>
        <position position="487"/>
    </location>
    <ligand>
        <name>Mg(2+)</name>
        <dbReference type="ChEBI" id="CHEBI:18420"/>
    </ligand>
</feature>
<feature type="binding site" evidence="18">
    <location>
        <position position="489"/>
    </location>
    <ligand>
        <name>Mg(2+)</name>
        <dbReference type="ChEBI" id="CHEBI:18420"/>
    </ligand>
</feature>
<feature type="binding site" evidence="1">
    <location>
        <position position="582"/>
    </location>
    <ligand>
        <name>ATP</name>
        <dbReference type="ChEBI" id="CHEBI:30616"/>
    </ligand>
</feature>
<feature type="binding site" evidence="18">
    <location>
        <position position="634"/>
    </location>
    <ligand>
        <name>ATP</name>
        <dbReference type="ChEBI" id="CHEBI:30616"/>
    </ligand>
</feature>
<feature type="binding site" evidence="18">
    <location>
        <position position="699"/>
    </location>
    <ligand>
        <name>ATP</name>
        <dbReference type="ChEBI" id="CHEBI:30616"/>
    </ligand>
</feature>
<feature type="binding site" evidence="18">
    <location>
        <begin position="816"/>
        <end position="820"/>
    </location>
    <ligand>
        <name>ATP</name>
        <dbReference type="ChEBI" id="CHEBI:30616"/>
    </ligand>
</feature>
<feature type="binding site" evidence="18">
    <location>
        <position position="816"/>
    </location>
    <ligand>
        <name>Mg(2+)</name>
        <dbReference type="ChEBI" id="CHEBI:18420"/>
    </ligand>
</feature>
<feature type="modified residue" description="Phosphoserine" evidence="20">
    <location>
        <position position="324"/>
    </location>
</feature>
<feature type="modified residue" description="Phosphoserine" evidence="20">
    <location>
        <position position="936"/>
    </location>
</feature>
<feature type="mutagenesis site" description="Loss of ATPase activity." evidence="4 6 7 8">
    <original>D</original>
    <variation>N</variation>
    <location>
        <position position="487"/>
    </location>
</feature>
<feature type="strand" evidence="23">
    <location>
        <begin position="12"/>
        <end position="20"/>
    </location>
</feature>
<feature type="strand" evidence="23">
    <location>
        <begin position="23"/>
        <end position="25"/>
    </location>
</feature>
<feature type="helix" evidence="23">
    <location>
        <begin position="29"/>
        <end position="43"/>
    </location>
</feature>
<feature type="helix" evidence="23">
    <location>
        <begin position="58"/>
        <end position="73"/>
    </location>
</feature>
<feature type="helix" evidence="23">
    <location>
        <begin position="75"/>
        <end position="77"/>
    </location>
</feature>
<feature type="helix" evidence="23">
    <location>
        <begin position="79"/>
        <end position="85"/>
    </location>
</feature>
<feature type="strand" evidence="21">
    <location>
        <begin position="87"/>
        <end position="90"/>
    </location>
</feature>
<feature type="turn" evidence="23">
    <location>
        <begin position="93"/>
        <end position="95"/>
    </location>
</feature>
<feature type="strand" evidence="23">
    <location>
        <begin position="98"/>
        <end position="103"/>
    </location>
</feature>
<feature type="strand" evidence="23">
    <location>
        <begin position="111"/>
        <end position="114"/>
    </location>
</feature>
<feature type="strand" evidence="21">
    <location>
        <begin position="116"/>
        <end position="120"/>
    </location>
</feature>
<feature type="strand" evidence="23">
    <location>
        <begin position="127"/>
        <end position="130"/>
    </location>
</feature>
<feature type="strand" evidence="23">
    <location>
        <begin position="133"/>
        <end position="138"/>
    </location>
</feature>
<feature type="turn" evidence="23">
    <location>
        <begin position="139"/>
        <end position="142"/>
    </location>
</feature>
<feature type="strand" evidence="23">
    <location>
        <begin position="143"/>
        <end position="145"/>
    </location>
</feature>
<feature type="turn" evidence="23">
    <location>
        <begin position="150"/>
        <end position="152"/>
    </location>
</feature>
<feature type="helix" evidence="23">
    <location>
        <begin position="157"/>
        <end position="161"/>
    </location>
</feature>
<feature type="helix" evidence="23">
    <location>
        <begin position="173"/>
        <end position="177"/>
    </location>
</feature>
<feature type="helix" evidence="23">
    <location>
        <begin position="189"/>
        <end position="196"/>
    </location>
</feature>
<feature type="helix" evidence="23">
    <location>
        <begin position="200"/>
        <end position="213"/>
    </location>
</feature>
<feature type="helix" evidence="23">
    <location>
        <begin position="219"/>
        <end position="246"/>
    </location>
</feature>
<feature type="helix" evidence="22">
    <location>
        <begin position="247"/>
        <end position="249"/>
    </location>
</feature>
<feature type="strand" evidence="23">
    <location>
        <begin position="256"/>
        <end position="260"/>
    </location>
</feature>
<feature type="strand" evidence="23">
    <location>
        <begin position="263"/>
        <end position="267"/>
    </location>
</feature>
<feature type="strand" evidence="22">
    <location>
        <begin position="269"/>
        <end position="271"/>
    </location>
</feature>
<feature type="strand" evidence="23">
    <location>
        <begin position="277"/>
        <end position="280"/>
    </location>
</feature>
<feature type="strand" evidence="23">
    <location>
        <begin position="291"/>
        <end position="297"/>
    </location>
</feature>
<feature type="strand" evidence="23">
    <location>
        <begin position="299"/>
        <end position="303"/>
    </location>
</feature>
<feature type="turn" evidence="23">
    <location>
        <begin position="304"/>
        <end position="308"/>
    </location>
</feature>
<feature type="strand" evidence="23">
    <location>
        <begin position="314"/>
        <end position="316"/>
    </location>
</feature>
<feature type="strand" evidence="23">
    <location>
        <begin position="319"/>
        <end position="322"/>
    </location>
</feature>
<feature type="strand" evidence="23">
    <location>
        <begin position="324"/>
        <end position="326"/>
    </location>
</feature>
<feature type="helix" evidence="23">
    <location>
        <begin position="333"/>
        <end position="337"/>
    </location>
</feature>
<feature type="strand" evidence="23">
    <location>
        <begin position="344"/>
        <end position="349"/>
    </location>
</feature>
<feature type="strand" evidence="23">
    <location>
        <begin position="361"/>
        <end position="363"/>
    </location>
</feature>
<feature type="strand" evidence="23">
    <location>
        <begin position="365"/>
        <end position="371"/>
    </location>
</feature>
<feature type="helix" evidence="23">
    <location>
        <begin position="373"/>
        <end position="375"/>
    </location>
</feature>
<feature type="helix" evidence="23">
    <location>
        <begin position="377"/>
        <end position="387"/>
    </location>
</feature>
<feature type="strand" evidence="21">
    <location>
        <begin position="392"/>
        <end position="395"/>
    </location>
</feature>
<feature type="helix" evidence="23">
    <location>
        <begin position="397"/>
        <end position="424"/>
    </location>
</feature>
<feature type="helix" evidence="23">
    <location>
        <begin position="428"/>
        <end position="440"/>
    </location>
</feature>
<feature type="helix" evidence="23">
    <location>
        <begin position="447"/>
        <end position="462"/>
    </location>
</feature>
<feature type="helix" evidence="23">
    <location>
        <begin position="463"/>
        <end position="465"/>
    </location>
</feature>
<feature type="strand" evidence="23">
    <location>
        <begin position="467"/>
        <end position="470"/>
    </location>
</feature>
<feature type="helix" evidence="23">
    <location>
        <begin position="472"/>
        <end position="474"/>
    </location>
</feature>
<feature type="helix" evidence="23">
    <location>
        <begin position="476"/>
        <end position="479"/>
    </location>
</feature>
<feature type="strand" evidence="23">
    <location>
        <begin position="483"/>
        <end position="486"/>
    </location>
</feature>
<feature type="turn" evidence="23">
    <location>
        <begin position="490"/>
        <end position="492"/>
    </location>
</feature>
<feature type="strand" evidence="23">
    <location>
        <begin position="498"/>
        <end position="501"/>
    </location>
</feature>
<feature type="strand" evidence="21">
    <location>
        <begin position="510"/>
        <end position="513"/>
    </location>
</feature>
<feature type="helix" evidence="23">
    <location>
        <begin position="523"/>
        <end position="531"/>
    </location>
</feature>
<feature type="strand" evidence="23">
    <location>
        <begin position="539"/>
        <end position="541"/>
    </location>
</feature>
<feature type="strand" evidence="23">
    <location>
        <begin position="543"/>
        <end position="545"/>
    </location>
</feature>
<feature type="helix" evidence="23">
    <location>
        <begin position="547"/>
        <end position="556"/>
    </location>
</feature>
<feature type="strand" evidence="23">
    <location>
        <begin position="562"/>
        <end position="564"/>
    </location>
</feature>
<feature type="strand" evidence="23">
    <location>
        <begin position="569"/>
        <end position="571"/>
    </location>
</feature>
<feature type="strand" evidence="23">
    <location>
        <begin position="574"/>
        <end position="579"/>
    </location>
</feature>
<feature type="strand" evidence="24">
    <location>
        <begin position="584"/>
        <end position="586"/>
    </location>
</feature>
<feature type="strand" evidence="23">
    <location>
        <begin position="591"/>
        <end position="594"/>
    </location>
</feature>
<feature type="strand" evidence="23">
    <location>
        <begin position="599"/>
        <end position="605"/>
    </location>
</feature>
<feature type="helix" evidence="23">
    <location>
        <begin position="607"/>
        <end position="611"/>
    </location>
</feature>
<feature type="helix" evidence="23">
    <location>
        <begin position="621"/>
        <end position="629"/>
    </location>
</feature>
<feature type="strand" evidence="23">
    <location>
        <begin position="630"/>
        <end position="632"/>
    </location>
</feature>
<feature type="strand" evidence="23">
    <location>
        <begin position="637"/>
        <end position="642"/>
    </location>
</feature>
<feature type="helix" evidence="23">
    <location>
        <begin position="656"/>
        <end position="659"/>
    </location>
</feature>
<feature type="strand" evidence="23">
    <location>
        <begin position="664"/>
        <end position="667"/>
    </location>
</feature>
<feature type="strand" evidence="23">
    <location>
        <begin position="670"/>
        <end position="672"/>
    </location>
</feature>
<feature type="helix" evidence="23">
    <location>
        <begin position="679"/>
        <end position="687"/>
    </location>
</feature>
<feature type="turn" evidence="23">
    <location>
        <begin position="688"/>
        <end position="690"/>
    </location>
</feature>
<feature type="strand" evidence="23">
    <location>
        <begin position="692"/>
        <end position="696"/>
    </location>
</feature>
<feature type="helix" evidence="23">
    <location>
        <begin position="701"/>
        <end position="711"/>
    </location>
</feature>
<feature type="strand" evidence="23">
    <location>
        <begin position="718"/>
        <end position="729"/>
    </location>
</feature>
<feature type="strand" evidence="23">
    <location>
        <begin position="732"/>
        <end position="740"/>
    </location>
</feature>
<feature type="strand" evidence="23">
    <location>
        <begin position="742"/>
        <end position="744"/>
    </location>
</feature>
<feature type="turn" evidence="23">
    <location>
        <begin position="747"/>
        <end position="749"/>
    </location>
</feature>
<feature type="helix" evidence="23">
    <location>
        <begin position="754"/>
        <end position="757"/>
    </location>
</feature>
<feature type="turn" evidence="23">
    <location>
        <begin position="758"/>
        <end position="760"/>
    </location>
</feature>
<feature type="strand" evidence="23">
    <location>
        <begin position="762"/>
        <end position="765"/>
    </location>
</feature>
<feature type="helix" evidence="23">
    <location>
        <begin position="767"/>
        <end position="771"/>
    </location>
</feature>
<feature type="turn" evidence="23">
    <location>
        <begin position="772"/>
        <end position="775"/>
    </location>
</feature>
<feature type="helix" evidence="23">
    <location>
        <begin position="779"/>
        <end position="783"/>
    </location>
</feature>
<feature type="strand" evidence="23">
    <location>
        <begin position="785"/>
        <end position="789"/>
    </location>
</feature>
<feature type="helix" evidence="23">
    <location>
        <begin position="796"/>
        <end position="807"/>
    </location>
</feature>
<feature type="strand" evidence="23">
    <location>
        <begin position="813"/>
        <end position="815"/>
    </location>
</feature>
<feature type="strand" evidence="21">
    <location>
        <begin position="817"/>
        <end position="819"/>
    </location>
</feature>
<feature type="helix" evidence="23">
    <location>
        <begin position="821"/>
        <end position="826"/>
    </location>
</feature>
<feature type="strand" evidence="23">
    <location>
        <begin position="827"/>
        <end position="833"/>
    </location>
</feature>
<feature type="helix" evidence="23">
    <location>
        <begin position="838"/>
        <end position="853"/>
    </location>
</feature>
<feature type="turn" evidence="23">
    <location>
        <begin position="956"/>
        <end position="961"/>
    </location>
</feature>
<feature type="strand" evidence="23">
    <location>
        <begin position="963"/>
        <end position="968"/>
    </location>
</feature>
<feature type="helix" evidence="23">
    <location>
        <begin position="973"/>
        <end position="1009"/>
    </location>
</feature>
<feature type="turn" evidence="24">
    <location>
        <begin position="1010"/>
        <end position="1013"/>
    </location>
</feature>
<feature type="helix" evidence="23">
    <location>
        <begin position="1019"/>
        <end position="1034"/>
    </location>
</feature>
<feature type="strand" evidence="22">
    <location>
        <begin position="1053"/>
        <end position="1055"/>
    </location>
</feature>
<feature type="helix" evidence="23">
    <location>
        <begin position="1056"/>
        <end position="1083"/>
    </location>
</feature>
<feature type="helix" evidence="23">
    <location>
        <begin position="1100"/>
        <end position="1118"/>
    </location>
</feature>
<feature type="turn" evidence="23">
    <location>
        <begin position="1124"/>
        <end position="1126"/>
    </location>
</feature>
<feature type="helix" evidence="24">
    <location>
        <begin position="1130"/>
        <end position="1132"/>
    </location>
</feature>
<feature type="helix" evidence="23">
    <location>
        <begin position="1134"/>
        <end position="1151"/>
    </location>
</feature>
<feature type="helix" evidence="23">
    <location>
        <begin position="1156"/>
        <end position="1161"/>
    </location>
</feature>
<feature type="helix" evidence="23">
    <location>
        <begin position="1170"/>
        <end position="1196"/>
    </location>
</feature>
<feature type="strand" evidence="21">
    <location>
        <begin position="1198"/>
        <end position="1200"/>
    </location>
</feature>
<feature type="turn" evidence="23">
    <location>
        <begin position="1204"/>
        <end position="1206"/>
    </location>
</feature>